<evidence type="ECO:0000250" key="1"/>
<evidence type="ECO:0000255" key="2"/>
<evidence type="ECO:0000256" key="3">
    <source>
        <dbReference type="SAM" id="MobiDB-lite"/>
    </source>
</evidence>
<evidence type="ECO:0000305" key="4"/>
<comment type="function">
    <text evidence="1">Required for efficient assembly and nuclear export of the 60S ribosomal subunit.</text>
</comment>
<comment type="subunit">
    <text evidence="1">Component of the 66S pre-ribosomal particle.</text>
</comment>
<comment type="subcellular location">
    <subcellularLocation>
        <location evidence="1">Nucleus</location>
        <location evidence="1">Nucleolus</location>
    </subcellularLocation>
</comment>
<comment type="similarity">
    <text evidence="4">Belongs to the LOC1 family.</text>
</comment>
<accession>Q5AJF1</accession>
<accession>A0A1D8PJD0</accession>
<reference key="1">
    <citation type="journal article" date="2004" name="Proc. Natl. Acad. Sci. U.S.A.">
        <title>The diploid genome sequence of Candida albicans.</title>
        <authorList>
            <person name="Jones T."/>
            <person name="Federspiel N.A."/>
            <person name="Chibana H."/>
            <person name="Dungan J."/>
            <person name="Kalman S."/>
            <person name="Magee B.B."/>
            <person name="Newport G."/>
            <person name="Thorstenson Y.R."/>
            <person name="Agabian N."/>
            <person name="Magee P.T."/>
            <person name="Davis R.W."/>
            <person name="Scherer S."/>
        </authorList>
    </citation>
    <scope>NUCLEOTIDE SEQUENCE [LARGE SCALE GENOMIC DNA]</scope>
    <source>
        <strain>SC5314 / ATCC MYA-2876</strain>
    </source>
</reference>
<reference key="2">
    <citation type="journal article" date="2007" name="Genome Biol.">
        <title>Assembly of the Candida albicans genome into sixteen supercontigs aligned on the eight chromosomes.</title>
        <authorList>
            <person name="van het Hoog M."/>
            <person name="Rast T.J."/>
            <person name="Martchenko M."/>
            <person name="Grindle S."/>
            <person name="Dignard D."/>
            <person name="Hogues H."/>
            <person name="Cuomo C."/>
            <person name="Berriman M."/>
            <person name="Scherer S."/>
            <person name="Magee B.B."/>
            <person name="Whiteway M."/>
            <person name="Chibana H."/>
            <person name="Nantel A."/>
            <person name="Magee P.T."/>
        </authorList>
    </citation>
    <scope>GENOME REANNOTATION</scope>
    <source>
        <strain>SC5314 / ATCC MYA-2876</strain>
    </source>
</reference>
<reference key="3">
    <citation type="journal article" date="2013" name="Genome Biol.">
        <title>Assembly of a phased diploid Candida albicans genome facilitates allele-specific measurements and provides a simple model for repeat and indel structure.</title>
        <authorList>
            <person name="Muzzey D."/>
            <person name="Schwartz K."/>
            <person name="Weissman J.S."/>
            <person name="Sherlock G."/>
        </authorList>
    </citation>
    <scope>NUCLEOTIDE SEQUENCE [LARGE SCALE GENOMIC DNA]</scope>
    <scope>GENOME REANNOTATION</scope>
    <source>
        <strain>SC5314 / ATCC MYA-2876</strain>
    </source>
</reference>
<gene>
    <name type="primary">LOC1</name>
    <name type="ordered locus">CAALFM_C302040CA</name>
    <name type="ORF">CaO19.1642</name>
    <name type="ORF">CaO19.9209</name>
</gene>
<sequence length="206" mass="23806">MAPRQSKTAKRNKTQNKTRTVDSEVFSDSAAKNLLADQPKLTPKSKVKKISKLALKKQQAKIRLYGAKNGKEYREDQLNIPTLNKAIVPGVKAKRGKKGKKFVDDNDTLTMNRLVKSINDKYDQVNESKLEKSRRLEEIRDLKRQEIERKEQQKKDKLEGKKDELRSKASVARSTRRKNAKARRADEESQEQEEESPKKKKKVSFV</sequence>
<protein>
    <recommendedName>
        <fullName>60S ribosomal subunit assembly/export protein LOC1</fullName>
    </recommendedName>
</protein>
<feature type="chain" id="PRO_0000308790" description="60S ribosomal subunit assembly/export protein LOC1">
    <location>
        <begin position="1"/>
        <end position="206"/>
    </location>
</feature>
<feature type="region of interest" description="Disordered" evidence="3">
    <location>
        <begin position="1"/>
        <end position="25"/>
    </location>
</feature>
<feature type="region of interest" description="Disordered" evidence="3">
    <location>
        <begin position="144"/>
        <end position="206"/>
    </location>
</feature>
<feature type="coiled-coil region" evidence="2">
    <location>
        <begin position="118"/>
        <end position="196"/>
    </location>
</feature>
<feature type="compositionally biased region" description="Basic residues" evidence="3">
    <location>
        <begin position="7"/>
        <end position="16"/>
    </location>
</feature>
<feature type="compositionally biased region" description="Basic and acidic residues" evidence="3">
    <location>
        <begin position="144"/>
        <end position="167"/>
    </location>
</feature>
<proteinExistence type="inferred from homology"/>
<dbReference type="EMBL" id="CP017625">
    <property type="protein sequence ID" value="AOW28242.1"/>
    <property type="molecule type" value="Genomic_DNA"/>
</dbReference>
<dbReference type="RefSeq" id="XP_721719.1">
    <property type="nucleotide sequence ID" value="XM_716626.1"/>
</dbReference>
<dbReference type="SMR" id="Q5AJF1"/>
<dbReference type="FunCoup" id="Q5AJF1">
    <property type="interactions" value="394"/>
</dbReference>
<dbReference type="STRING" id="237561.Q5AJF1"/>
<dbReference type="EnsemblFungi" id="C3_02040C_A-T">
    <property type="protein sequence ID" value="C3_02040C_A-T-p1"/>
    <property type="gene ID" value="C3_02040C_A"/>
</dbReference>
<dbReference type="GeneID" id="3636579"/>
<dbReference type="KEGG" id="cal:CAALFM_C302040CA"/>
<dbReference type="CGD" id="CAL0000180322">
    <property type="gene designation" value="orf19.9209"/>
</dbReference>
<dbReference type="VEuPathDB" id="FungiDB:C3_02040C_A"/>
<dbReference type="eggNOG" id="ENOG502RY6R">
    <property type="taxonomic scope" value="Eukaryota"/>
</dbReference>
<dbReference type="HOGENOM" id="CLU_096593_1_0_1"/>
<dbReference type="InParanoid" id="Q5AJF1"/>
<dbReference type="OMA" id="NAEQEGH"/>
<dbReference type="OrthoDB" id="1743802at2759"/>
<dbReference type="PRO" id="PR:Q5AJF1"/>
<dbReference type="Proteomes" id="UP000000559">
    <property type="component" value="Chromosome 3"/>
</dbReference>
<dbReference type="GO" id="GO:0005730">
    <property type="term" value="C:nucleolus"/>
    <property type="evidence" value="ECO:0000318"/>
    <property type="project" value="GO_Central"/>
</dbReference>
<dbReference type="GO" id="GO:0030687">
    <property type="term" value="C:preribosome, large subunit precursor"/>
    <property type="evidence" value="ECO:0000318"/>
    <property type="project" value="GO_Central"/>
</dbReference>
<dbReference type="GO" id="GO:0003729">
    <property type="term" value="F:mRNA binding"/>
    <property type="evidence" value="ECO:0000318"/>
    <property type="project" value="GO_Central"/>
</dbReference>
<dbReference type="GO" id="GO:0008298">
    <property type="term" value="P:intracellular mRNA localization"/>
    <property type="evidence" value="ECO:0000318"/>
    <property type="project" value="GO_Central"/>
</dbReference>
<dbReference type="GO" id="GO:0051028">
    <property type="term" value="P:mRNA transport"/>
    <property type="evidence" value="ECO:0007669"/>
    <property type="project" value="UniProtKB-KW"/>
</dbReference>
<dbReference type="GO" id="GO:0042273">
    <property type="term" value="P:ribosomal large subunit biogenesis"/>
    <property type="evidence" value="ECO:0000318"/>
    <property type="project" value="GO_Central"/>
</dbReference>
<dbReference type="InterPro" id="IPR037650">
    <property type="entry name" value="Loc1"/>
</dbReference>
<dbReference type="PANTHER" id="PTHR28028">
    <property type="entry name" value="60S RIBOSOMAL SUBUNIT ASSEMBLY/EXPORT PROTEIN LOC1"/>
    <property type="match status" value="1"/>
</dbReference>
<dbReference type="PANTHER" id="PTHR28028:SF1">
    <property type="entry name" value="60S RIBOSOMAL SUBUNIT ASSEMBLY_EXPORT PROTEIN LOC1"/>
    <property type="match status" value="1"/>
</dbReference>
<keyword id="KW-0175">Coiled coil</keyword>
<keyword id="KW-0509">mRNA transport</keyword>
<keyword id="KW-0539">Nucleus</keyword>
<keyword id="KW-1185">Reference proteome</keyword>
<keyword id="KW-0690">Ribosome biogenesis</keyword>
<keyword id="KW-0813">Transport</keyword>
<name>LOC1_CANAL</name>
<organism>
    <name type="scientific">Candida albicans (strain SC5314 / ATCC MYA-2876)</name>
    <name type="common">Yeast</name>
    <dbReference type="NCBI Taxonomy" id="237561"/>
    <lineage>
        <taxon>Eukaryota</taxon>
        <taxon>Fungi</taxon>
        <taxon>Dikarya</taxon>
        <taxon>Ascomycota</taxon>
        <taxon>Saccharomycotina</taxon>
        <taxon>Pichiomycetes</taxon>
        <taxon>Debaryomycetaceae</taxon>
        <taxon>Candida/Lodderomyces clade</taxon>
        <taxon>Candida</taxon>
    </lineage>
</organism>